<dbReference type="EMBL" id="AE007869">
    <property type="protein sequence ID" value="AAK88500.1"/>
    <property type="molecule type" value="Genomic_DNA"/>
</dbReference>
<dbReference type="PIR" id="AH2918">
    <property type="entry name" value="AH2918"/>
</dbReference>
<dbReference type="PIR" id="C97693">
    <property type="entry name" value="C97693"/>
</dbReference>
<dbReference type="RefSeq" id="NP_355715.1">
    <property type="nucleotide sequence ID" value="NC_003062.2"/>
</dbReference>
<dbReference type="RefSeq" id="WP_003516451.1">
    <property type="nucleotide sequence ID" value="NC_003062.2"/>
</dbReference>
<dbReference type="SMR" id="Q8UBR5"/>
<dbReference type="STRING" id="176299.Atu2785"/>
<dbReference type="EnsemblBacteria" id="AAK88500">
    <property type="protein sequence ID" value="AAK88500"/>
    <property type="gene ID" value="Atu2785"/>
</dbReference>
<dbReference type="GeneID" id="92771892"/>
<dbReference type="KEGG" id="atu:Atu2785"/>
<dbReference type="PATRIC" id="fig|176299.10.peg.2795"/>
<dbReference type="eggNOG" id="COG0261">
    <property type="taxonomic scope" value="Bacteria"/>
</dbReference>
<dbReference type="HOGENOM" id="CLU_061463_3_2_5"/>
<dbReference type="OrthoDB" id="9813334at2"/>
<dbReference type="PhylomeDB" id="Q8UBR5"/>
<dbReference type="BioCyc" id="AGRO:ATU2785-MONOMER"/>
<dbReference type="Proteomes" id="UP000000813">
    <property type="component" value="Chromosome circular"/>
</dbReference>
<dbReference type="GO" id="GO:0005737">
    <property type="term" value="C:cytoplasm"/>
    <property type="evidence" value="ECO:0007669"/>
    <property type="project" value="UniProtKB-ARBA"/>
</dbReference>
<dbReference type="GO" id="GO:1990904">
    <property type="term" value="C:ribonucleoprotein complex"/>
    <property type="evidence" value="ECO:0007669"/>
    <property type="project" value="UniProtKB-KW"/>
</dbReference>
<dbReference type="GO" id="GO:0005840">
    <property type="term" value="C:ribosome"/>
    <property type="evidence" value="ECO:0007669"/>
    <property type="project" value="UniProtKB-KW"/>
</dbReference>
<dbReference type="GO" id="GO:0019843">
    <property type="term" value="F:rRNA binding"/>
    <property type="evidence" value="ECO:0007669"/>
    <property type="project" value="UniProtKB-UniRule"/>
</dbReference>
<dbReference type="GO" id="GO:0003735">
    <property type="term" value="F:structural constituent of ribosome"/>
    <property type="evidence" value="ECO:0007669"/>
    <property type="project" value="InterPro"/>
</dbReference>
<dbReference type="GO" id="GO:0006412">
    <property type="term" value="P:translation"/>
    <property type="evidence" value="ECO:0007669"/>
    <property type="project" value="UniProtKB-UniRule"/>
</dbReference>
<dbReference type="HAMAP" id="MF_01363">
    <property type="entry name" value="Ribosomal_bL21"/>
    <property type="match status" value="1"/>
</dbReference>
<dbReference type="InterPro" id="IPR028909">
    <property type="entry name" value="bL21-like"/>
</dbReference>
<dbReference type="InterPro" id="IPR036164">
    <property type="entry name" value="bL21-like_sf"/>
</dbReference>
<dbReference type="InterPro" id="IPR001787">
    <property type="entry name" value="Ribosomal_bL21"/>
</dbReference>
<dbReference type="NCBIfam" id="TIGR00061">
    <property type="entry name" value="L21"/>
    <property type="match status" value="1"/>
</dbReference>
<dbReference type="PANTHER" id="PTHR21349">
    <property type="entry name" value="50S RIBOSOMAL PROTEIN L21"/>
    <property type="match status" value="1"/>
</dbReference>
<dbReference type="PANTHER" id="PTHR21349:SF0">
    <property type="entry name" value="LARGE RIBOSOMAL SUBUNIT PROTEIN BL21M"/>
    <property type="match status" value="1"/>
</dbReference>
<dbReference type="Pfam" id="PF00829">
    <property type="entry name" value="Ribosomal_L21p"/>
    <property type="match status" value="1"/>
</dbReference>
<dbReference type="SUPFAM" id="SSF141091">
    <property type="entry name" value="L21p-like"/>
    <property type="match status" value="1"/>
</dbReference>
<protein>
    <recommendedName>
        <fullName evidence="1">Large ribosomal subunit protein bL21</fullName>
    </recommendedName>
    <alternativeName>
        <fullName evidence="2">50S ribosomal protein L21</fullName>
    </alternativeName>
</protein>
<organism>
    <name type="scientific">Agrobacterium fabrum (strain C58 / ATCC 33970)</name>
    <name type="common">Agrobacterium tumefaciens (strain C58)</name>
    <dbReference type="NCBI Taxonomy" id="176299"/>
    <lineage>
        <taxon>Bacteria</taxon>
        <taxon>Pseudomonadati</taxon>
        <taxon>Pseudomonadota</taxon>
        <taxon>Alphaproteobacteria</taxon>
        <taxon>Hyphomicrobiales</taxon>
        <taxon>Rhizobiaceae</taxon>
        <taxon>Rhizobium/Agrobacterium group</taxon>
        <taxon>Agrobacterium</taxon>
        <taxon>Agrobacterium tumefaciens complex</taxon>
    </lineage>
</organism>
<accession>Q8UBR5</accession>
<accession>Q7CW94</accession>
<evidence type="ECO:0000255" key="1">
    <source>
        <dbReference type="HAMAP-Rule" id="MF_01363"/>
    </source>
</evidence>
<evidence type="ECO:0000305" key="2"/>
<comment type="function">
    <text evidence="1">This protein binds to 23S rRNA in the presence of protein L20.</text>
</comment>
<comment type="subunit">
    <text evidence="1">Part of the 50S ribosomal subunit. Contacts protein L20.</text>
</comment>
<comment type="similarity">
    <text evidence="1">Belongs to the bacterial ribosomal protein bL21 family.</text>
</comment>
<proteinExistence type="inferred from homology"/>
<reference key="1">
    <citation type="journal article" date="2001" name="Science">
        <title>The genome of the natural genetic engineer Agrobacterium tumefaciens C58.</title>
        <authorList>
            <person name="Wood D.W."/>
            <person name="Setubal J.C."/>
            <person name="Kaul R."/>
            <person name="Monks D.E."/>
            <person name="Kitajima J.P."/>
            <person name="Okura V.K."/>
            <person name="Zhou Y."/>
            <person name="Chen L."/>
            <person name="Wood G.E."/>
            <person name="Almeida N.F. Jr."/>
            <person name="Woo L."/>
            <person name="Chen Y."/>
            <person name="Paulsen I.T."/>
            <person name="Eisen J.A."/>
            <person name="Karp P.D."/>
            <person name="Bovee D. Sr."/>
            <person name="Chapman P."/>
            <person name="Clendenning J."/>
            <person name="Deatherage G."/>
            <person name="Gillet W."/>
            <person name="Grant C."/>
            <person name="Kutyavin T."/>
            <person name="Levy R."/>
            <person name="Li M.-J."/>
            <person name="McClelland E."/>
            <person name="Palmieri A."/>
            <person name="Raymond C."/>
            <person name="Rouse G."/>
            <person name="Saenphimmachak C."/>
            <person name="Wu Z."/>
            <person name="Romero P."/>
            <person name="Gordon D."/>
            <person name="Zhang S."/>
            <person name="Yoo H."/>
            <person name="Tao Y."/>
            <person name="Biddle P."/>
            <person name="Jung M."/>
            <person name="Krespan W."/>
            <person name="Perry M."/>
            <person name="Gordon-Kamm B."/>
            <person name="Liao L."/>
            <person name="Kim S."/>
            <person name="Hendrick C."/>
            <person name="Zhao Z.-Y."/>
            <person name="Dolan M."/>
            <person name="Chumley F."/>
            <person name="Tingey S.V."/>
            <person name="Tomb J.-F."/>
            <person name="Gordon M.P."/>
            <person name="Olson M.V."/>
            <person name="Nester E.W."/>
        </authorList>
    </citation>
    <scope>NUCLEOTIDE SEQUENCE [LARGE SCALE GENOMIC DNA]</scope>
    <source>
        <strain>C58 / ATCC 33970</strain>
    </source>
</reference>
<reference key="2">
    <citation type="journal article" date="2001" name="Science">
        <title>Genome sequence of the plant pathogen and biotechnology agent Agrobacterium tumefaciens C58.</title>
        <authorList>
            <person name="Goodner B."/>
            <person name="Hinkle G."/>
            <person name="Gattung S."/>
            <person name="Miller N."/>
            <person name="Blanchard M."/>
            <person name="Qurollo B."/>
            <person name="Goldman B.S."/>
            <person name="Cao Y."/>
            <person name="Askenazi M."/>
            <person name="Halling C."/>
            <person name="Mullin L."/>
            <person name="Houmiel K."/>
            <person name="Gordon J."/>
            <person name="Vaudin M."/>
            <person name="Iartchouk O."/>
            <person name="Epp A."/>
            <person name="Liu F."/>
            <person name="Wollam C."/>
            <person name="Allinger M."/>
            <person name="Doughty D."/>
            <person name="Scott C."/>
            <person name="Lappas C."/>
            <person name="Markelz B."/>
            <person name="Flanagan C."/>
            <person name="Crowell C."/>
            <person name="Gurson J."/>
            <person name="Lomo C."/>
            <person name="Sear C."/>
            <person name="Strub G."/>
            <person name="Cielo C."/>
            <person name="Slater S."/>
        </authorList>
    </citation>
    <scope>NUCLEOTIDE SEQUENCE [LARGE SCALE GENOMIC DNA]</scope>
    <source>
        <strain>C58 / ATCC 33970</strain>
    </source>
</reference>
<gene>
    <name evidence="1" type="primary">rplU</name>
    <name type="ordered locus">Atu2785</name>
    <name type="ORF">AGR_C_5054</name>
</gene>
<name>RL21_AGRFC</name>
<feature type="chain" id="PRO_0000269268" description="Large ribosomal subunit protein bL21">
    <location>
        <begin position="1"/>
        <end position="104"/>
    </location>
</feature>
<sequence length="104" mass="11380">MFAVIKTGGKQYRVAADAVLTIEKLEAEAGATVEFTEVLVIGEGADAQFGAPFVKGAIVKAEVVEHNRGKKVIAFKKRRRQNSKRSRGHRQHHTVVRITDIVAA</sequence>
<keyword id="KW-1185">Reference proteome</keyword>
<keyword id="KW-0687">Ribonucleoprotein</keyword>
<keyword id="KW-0689">Ribosomal protein</keyword>
<keyword id="KW-0694">RNA-binding</keyword>
<keyword id="KW-0699">rRNA-binding</keyword>